<gene>
    <name evidence="7" type="primary">ABHD12B</name>
    <name type="synonym">C14orf29</name>
</gene>
<name>AB12B_HUMAN</name>
<evidence type="ECO:0000269" key="1">
    <source>
    </source>
</evidence>
<evidence type="ECO:0000269" key="2">
    <source>
    </source>
</evidence>
<evidence type="ECO:0000303" key="3">
    <source>
    </source>
</evidence>
<evidence type="ECO:0000303" key="4">
    <source>
    </source>
</evidence>
<evidence type="ECO:0000303" key="5">
    <source ref="1"/>
</evidence>
<evidence type="ECO:0000305" key="6"/>
<evidence type="ECO:0000312" key="7">
    <source>
        <dbReference type="HGNC" id="HGNC:19837"/>
    </source>
</evidence>
<sequence>MDAQDCQAAASPEPPGPPARSCVAAWWDMVDRNLRYFPHSCSMLGRKIAALYDSFTSKSLKEHVFLPLIDMLIYFNFFKAPFLVDLKKPELKIPHTVNFYLRVEPGVMLGIWHTVPSCRGEDAKGKDCCWYEAALRDGNPIIVYLHGSAEHRAASHRLKLVKVLSDGGFHVLSVDYRGFGDSTGKPTEEGLTTDAICVYEWTKARSGITPVCLWGHSLGTGVATNAAKVLEEKGCPVDAIVLEAPFTNMWVASINYPLLKIYRNIPGFLRTLMDALRKDKIIFPNDENVKFLSSPLLILHGEDDRTVPLEYGKKLYEIARNAYRNKERVKMVIFPPGFQHNLLCKSPTLLITVRDFLSKQWS</sequence>
<feature type="chain" id="PRO_0000089887" description="Protein ABHD12B">
    <location>
        <begin position="1"/>
        <end position="362"/>
    </location>
</feature>
<feature type="splice variant" id="VSP_010687" description="In isoform 2 and isoform 5." evidence="3 4 5">
    <location>
        <begin position="36"/>
        <end position="112"/>
    </location>
</feature>
<feature type="splice variant" id="VSP_041149" description="In isoform 4." evidence="5">
    <original>YFPHSCSMLGRKIAALYDSFTSKSL</original>
    <variation>QSPISCGFKETRVKDSSHSELLPES</variation>
    <location>
        <begin position="36"/>
        <end position="60"/>
    </location>
</feature>
<feature type="splice variant" id="VSP_041150" description="In isoform 4." evidence="5">
    <location>
        <begin position="61"/>
        <end position="362"/>
    </location>
</feature>
<feature type="splice variant" id="VSP_010688" description="In isoform 5." evidence="3">
    <original>IYRNIPGFLRTLMDALRKDKIIFPNDENVKFLSSPLLILHGEDDRTVPLEYG</original>
    <variation>SLALSSRLECSGVISAHCKLRFPGSRHSPASASRVAGTTGARHHAWLIFLCF</variation>
    <location>
        <begin position="261"/>
        <end position="312"/>
    </location>
</feature>
<feature type="splice variant" id="VSP_010689" description="In isoform 5." evidence="3">
    <location>
        <begin position="313"/>
        <end position="362"/>
    </location>
</feature>
<feature type="sequence variant" id="VAR_035676" description="In a breast cancer sample; somatic mutation; dbSNP:rs28564871." evidence="2">
    <original>I</original>
    <variation>V</variation>
    <location>
        <position position="282"/>
    </location>
</feature>
<feature type="sequence variant" id="VAR_019100" description="In dbSNP:rs7154732." evidence="1">
    <original>F</original>
    <variation>L</variation>
    <location>
        <position position="334"/>
    </location>
</feature>
<accession>Q7Z5M8</accession>
<accession>Q3KNR9</accession>
<accession>Q3KNS0</accession>
<accession>Q7Z5M6</accession>
<accession>Q7Z5M7</accession>
<accession>Q8N4D2</accession>
<organism>
    <name type="scientific">Homo sapiens</name>
    <name type="common">Human</name>
    <dbReference type="NCBI Taxonomy" id="9606"/>
    <lineage>
        <taxon>Eukaryota</taxon>
        <taxon>Metazoa</taxon>
        <taxon>Chordata</taxon>
        <taxon>Craniata</taxon>
        <taxon>Vertebrata</taxon>
        <taxon>Euteleostomi</taxon>
        <taxon>Mammalia</taxon>
        <taxon>Eutheria</taxon>
        <taxon>Euarchontoglires</taxon>
        <taxon>Primates</taxon>
        <taxon>Haplorrhini</taxon>
        <taxon>Catarrhini</taxon>
        <taxon>Hominidae</taxon>
        <taxon>Homo</taxon>
    </lineage>
</organism>
<dbReference type="EC" id="3.-.-.-"/>
<dbReference type="EMBL" id="AY311396">
    <property type="protein sequence ID" value="AAP78476.1"/>
    <property type="molecule type" value="mRNA"/>
</dbReference>
<dbReference type="EMBL" id="AY311397">
    <property type="protein sequence ID" value="AAP78477.1"/>
    <property type="status" value="ALT_SEQ"/>
    <property type="molecule type" value="mRNA"/>
</dbReference>
<dbReference type="EMBL" id="AY311398">
    <property type="protein sequence ID" value="AAP78478.1"/>
    <property type="molecule type" value="mRNA"/>
</dbReference>
<dbReference type="EMBL" id="AY311399">
    <property type="protein sequence ID" value="AAP78479.1"/>
    <property type="status" value="ALT_SEQ"/>
    <property type="molecule type" value="mRNA"/>
</dbReference>
<dbReference type="EMBL" id="AK128464">
    <property type="protein sequence ID" value="BAC87452.1"/>
    <property type="molecule type" value="mRNA"/>
</dbReference>
<dbReference type="EMBL" id="AL358334">
    <property type="status" value="NOT_ANNOTATED_CDS"/>
    <property type="molecule type" value="Genomic_DNA"/>
</dbReference>
<dbReference type="EMBL" id="BC034603">
    <property type="protein sequence ID" value="AAH34603.3"/>
    <property type="status" value="ALT_INIT"/>
    <property type="molecule type" value="mRNA"/>
</dbReference>
<dbReference type="EMBL" id="BC107141">
    <property type="protein sequence ID" value="AAI07142.1"/>
    <property type="molecule type" value="mRNA"/>
</dbReference>
<dbReference type="EMBL" id="BC107142">
    <property type="protein sequence ID" value="AAI07143.1"/>
    <property type="molecule type" value="mRNA"/>
</dbReference>
<dbReference type="CCDS" id="CCDS55916.1">
    <molecule id="Q7Z5M8-1"/>
</dbReference>
<dbReference type="CCDS" id="CCDS9702.1">
    <molecule id="Q7Z5M8-2"/>
</dbReference>
<dbReference type="RefSeq" id="NP_001193602.1">
    <molecule id="Q7Z5M8-1"/>
    <property type="nucleotide sequence ID" value="NM_001206673.2"/>
</dbReference>
<dbReference type="RefSeq" id="NP_853511.2">
    <property type="nucleotide sequence ID" value="NM_181533.3"/>
</dbReference>
<dbReference type="RefSeq" id="NP_861535.1">
    <molecule id="Q7Z5M8-2"/>
    <property type="nucleotide sequence ID" value="NM_181814.2"/>
</dbReference>
<dbReference type="SMR" id="Q7Z5M8"/>
<dbReference type="BioGRID" id="126913">
    <property type="interactions" value="5"/>
</dbReference>
<dbReference type="FunCoup" id="Q7Z5M8">
    <property type="interactions" value="248"/>
</dbReference>
<dbReference type="IntAct" id="Q7Z5M8">
    <property type="interactions" value="4"/>
</dbReference>
<dbReference type="STRING" id="9606.ENSP00000336693"/>
<dbReference type="ESTHER" id="human-ABHD12B">
    <property type="family name" value="ABHD12-PHARC"/>
</dbReference>
<dbReference type="MEROPS" id="S09.061"/>
<dbReference type="GlyCosmos" id="Q7Z5M8">
    <property type="glycosylation" value="1 site, 1 glycan"/>
</dbReference>
<dbReference type="GlyGen" id="Q7Z5M8">
    <property type="glycosylation" value="1 site, 1 O-linked glycan (1 site)"/>
</dbReference>
<dbReference type="iPTMnet" id="Q7Z5M8"/>
<dbReference type="PhosphoSitePlus" id="Q7Z5M8"/>
<dbReference type="BioMuta" id="ABHD12B"/>
<dbReference type="DMDM" id="50401854"/>
<dbReference type="MassIVE" id="Q7Z5M8"/>
<dbReference type="PaxDb" id="9606-ENSP00000336693"/>
<dbReference type="PeptideAtlas" id="Q7Z5M8"/>
<dbReference type="Antibodypedia" id="130">
    <property type="antibodies" value="87 antibodies from 26 providers"/>
</dbReference>
<dbReference type="DNASU" id="145447"/>
<dbReference type="Ensembl" id="ENST00000337334.7">
    <molecule id="Q7Z5M8-1"/>
    <property type="protein sequence ID" value="ENSP00000336693.2"/>
    <property type="gene ID" value="ENSG00000131969.15"/>
</dbReference>
<dbReference type="Ensembl" id="ENST00000353130.5">
    <molecule id="Q7Z5M8-2"/>
    <property type="protein sequence ID" value="ENSP00000343951.1"/>
    <property type="gene ID" value="ENSG00000131969.15"/>
</dbReference>
<dbReference type="Ensembl" id="ENST00000382029.7">
    <molecule id="Q7Z5M8-4"/>
    <property type="protein sequence ID" value="ENSP00000371460.3"/>
    <property type="gene ID" value="ENSG00000131969.15"/>
</dbReference>
<dbReference type="Ensembl" id="ENST00000557345.5">
    <molecule id="Q7Z5M8-4"/>
    <property type="protein sequence ID" value="ENSP00000450643.1"/>
    <property type="gene ID" value="ENSG00000131969.15"/>
</dbReference>
<dbReference type="GeneID" id="145447"/>
<dbReference type="KEGG" id="hsa:145447"/>
<dbReference type="MANE-Select" id="ENST00000337334.7">
    <property type="protein sequence ID" value="ENSP00000336693.2"/>
    <property type="RefSeq nucleotide sequence ID" value="NM_001206673.2"/>
    <property type="RefSeq protein sequence ID" value="NP_001193602.1"/>
</dbReference>
<dbReference type="UCSC" id="uc001wyq.4">
    <molecule id="Q7Z5M8-1"/>
    <property type="organism name" value="human"/>
</dbReference>
<dbReference type="AGR" id="HGNC:19837"/>
<dbReference type="CTD" id="145447"/>
<dbReference type="DisGeNET" id="145447"/>
<dbReference type="GeneCards" id="ABHD12B"/>
<dbReference type="HGNC" id="HGNC:19837">
    <property type="gene designation" value="ABHD12B"/>
</dbReference>
<dbReference type="HPA" id="ENSG00000131969">
    <property type="expression patterns" value="Group enriched (brain, retina, skin)"/>
</dbReference>
<dbReference type="neXtProt" id="NX_Q7Z5M8"/>
<dbReference type="OpenTargets" id="ENSG00000131969"/>
<dbReference type="PharmGKB" id="PA162375213"/>
<dbReference type="VEuPathDB" id="HostDB:ENSG00000131969"/>
<dbReference type="eggNOG" id="KOG1552">
    <property type="taxonomic scope" value="Eukaryota"/>
</dbReference>
<dbReference type="GeneTree" id="ENSGT00940000161597"/>
<dbReference type="HOGENOM" id="CLU_029375_1_1_1"/>
<dbReference type="InParanoid" id="Q7Z5M8"/>
<dbReference type="OMA" id="WWDMVVR"/>
<dbReference type="OrthoDB" id="10249433at2759"/>
<dbReference type="PAN-GO" id="Q7Z5M8">
    <property type="GO annotations" value="6 GO annotations based on evolutionary models"/>
</dbReference>
<dbReference type="PhylomeDB" id="Q7Z5M8"/>
<dbReference type="TreeFam" id="TF315122"/>
<dbReference type="PathwayCommons" id="Q7Z5M8"/>
<dbReference type="SignaLink" id="Q7Z5M8"/>
<dbReference type="BioGRID-ORCS" id="145447">
    <property type="hits" value="7 hits in 1141 CRISPR screens"/>
</dbReference>
<dbReference type="ChiTaRS" id="ABHD12B">
    <property type="organism name" value="human"/>
</dbReference>
<dbReference type="GenomeRNAi" id="145447"/>
<dbReference type="Pharos" id="Q7Z5M8">
    <property type="development level" value="Tdark"/>
</dbReference>
<dbReference type="PRO" id="PR:Q7Z5M8"/>
<dbReference type="Proteomes" id="UP000005640">
    <property type="component" value="Chromosome 14"/>
</dbReference>
<dbReference type="RNAct" id="Q7Z5M8">
    <property type="molecule type" value="protein"/>
</dbReference>
<dbReference type="Bgee" id="ENSG00000131969">
    <property type="expression patterns" value="Expressed in upper arm skin and 117 other cell types or tissues"/>
</dbReference>
<dbReference type="GO" id="GO:0005789">
    <property type="term" value="C:endoplasmic reticulum membrane"/>
    <property type="evidence" value="ECO:0000318"/>
    <property type="project" value="GO_Central"/>
</dbReference>
<dbReference type="GO" id="GO:0004622">
    <property type="term" value="F:lysophospholipase activity"/>
    <property type="evidence" value="ECO:0000318"/>
    <property type="project" value="GO_Central"/>
</dbReference>
<dbReference type="GO" id="GO:0047372">
    <property type="term" value="F:monoacylglycerol lipase activity"/>
    <property type="evidence" value="ECO:0000318"/>
    <property type="project" value="GO_Central"/>
</dbReference>
<dbReference type="GO" id="GO:0052651">
    <property type="term" value="P:monoacylglycerol catabolic process"/>
    <property type="evidence" value="ECO:0000318"/>
    <property type="project" value="GO_Central"/>
</dbReference>
<dbReference type="GO" id="GO:0006660">
    <property type="term" value="P:phosphatidylserine catabolic process"/>
    <property type="evidence" value="ECO:0000318"/>
    <property type="project" value="GO_Central"/>
</dbReference>
<dbReference type="Gene3D" id="3.40.50.1820">
    <property type="entry name" value="alpha/beta hydrolase"/>
    <property type="match status" value="1"/>
</dbReference>
<dbReference type="InterPro" id="IPR029058">
    <property type="entry name" value="AB_hydrolase_fold"/>
</dbReference>
<dbReference type="InterPro" id="IPR022742">
    <property type="entry name" value="Hydrolase_4"/>
</dbReference>
<dbReference type="PANTHER" id="PTHR12277">
    <property type="entry name" value="ALPHA/BETA HYDROLASE DOMAIN-CONTAINING PROTEIN"/>
    <property type="match status" value="1"/>
</dbReference>
<dbReference type="PANTHER" id="PTHR12277:SF69">
    <property type="entry name" value="PROTEIN ABHD12B"/>
    <property type="match status" value="1"/>
</dbReference>
<dbReference type="Pfam" id="PF12146">
    <property type="entry name" value="Hydrolase_4"/>
    <property type="match status" value="1"/>
</dbReference>
<dbReference type="SUPFAM" id="SSF53474">
    <property type="entry name" value="alpha/beta-Hydrolases"/>
    <property type="match status" value="1"/>
</dbReference>
<reference key="1">
    <citation type="submission" date="2003-06" db="EMBL/GenBank/DDBJ databases">
        <title>Cloning and characterization of C14orf29.</title>
        <authorList>
            <person name="Schulz H.L."/>
            <person name="Weber B.H.F."/>
        </authorList>
    </citation>
    <scope>NUCLEOTIDE SEQUENCE [MRNA] (ISOFORMS 1; 2 AND 4)</scope>
</reference>
<reference key="2">
    <citation type="journal article" date="2004" name="Nat. Genet.">
        <title>Complete sequencing and characterization of 21,243 full-length human cDNAs.</title>
        <authorList>
            <person name="Ota T."/>
            <person name="Suzuki Y."/>
            <person name="Nishikawa T."/>
            <person name="Otsuki T."/>
            <person name="Sugiyama T."/>
            <person name="Irie R."/>
            <person name="Wakamatsu A."/>
            <person name="Hayashi K."/>
            <person name="Sato H."/>
            <person name="Nagai K."/>
            <person name="Kimura K."/>
            <person name="Makita H."/>
            <person name="Sekine M."/>
            <person name="Obayashi M."/>
            <person name="Nishi T."/>
            <person name="Shibahara T."/>
            <person name="Tanaka T."/>
            <person name="Ishii S."/>
            <person name="Yamamoto J."/>
            <person name="Saito K."/>
            <person name="Kawai Y."/>
            <person name="Isono Y."/>
            <person name="Nakamura Y."/>
            <person name="Nagahari K."/>
            <person name="Murakami K."/>
            <person name="Yasuda T."/>
            <person name="Iwayanagi T."/>
            <person name="Wagatsuma M."/>
            <person name="Shiratori A."/>
            <person name="Sudo H."/>
            <person name="Hosoiri T."/>
            <person name="Kaku Y."/>
            <person name="Kodaira H."/>
            <person name="Kondo H."/>
            <person name="Sugawara M."/>
            <person name="Takahashi M."/>
            <person name="Kanda K."/>
            <person name="Yokoi T."/>
            <person name="Furuya T."/>
            <person name="Kikkawa E."/>
            <person name="Omura Y."/>
            <person name="Abe K."/>
            <person name="Kamihara K."/>
            <person name="Katsuta N."/>
            <person name="Sato K."/>
            <person name="Tanikawa M."/>
            <person name="Yamazaki M."/>
            <person name="Ninomiya K."/>
            <person name="Ishibashi T."/>
            <person name="Yamashita H."/>
            <person name="Murakawa K."/>
            <person name="Fujimori K."/>
            <person name="Tanai H."/>
            <person name="Kimata M."/>
            <person name="Watanabe M."/>
            <person name="Hiraoka S."/>
            <person name="Chiba Y."/>
            <person name="Ishida S."/>
            <person name="Ono Y."/>
            <person name="Takiguchi S."/>
            <person name="Watanabe S."/>
            <person name="Yosida M."/>
            <person name="Hotuta T."/>
            <person name="Kusano J."/>
            <person name="Kanehori K."/>
            <person name="Takahashi-Fujii A."/>
            <person name="Hara H."/>
            <person name="Tanase T.-O."/>
            <person name="Nomura Y."/>
            <person name="Togiya S."/>
            <person name="Komai F."/>
            <person name="Hara R."/>
            <person name="Takeuchi K."/>
            <person name="Arita M."/>
            <person name="Imose N."/>
            <person name="Musashino K."/>
            <person name="Yuuki H."/>
            <person name="Oshima A."/>
            <person name="Sasaki N."/>
            <person name="Aotsuka S."/>
            <person name="Yoshikawa Y."/>
            <person name="Matsunawa H."/>
            <person name="Ichihara T."/>
            <person name="Shiohata N."/>
            <person name="Sano S."/>
            <person name="Moriya S."/>
            <person name="Momiyama H."/>
            <person name="Satoh N."/>
            <person name="Takami S."/>
            <person name="Terashima Y."/>
            <person name="Suzuki O."/>
            <person name="Nakagawa S."/>
            <person name="Senoh A."/>
            <person name="Mizoguchi H."/>
            <person name="Goto Y."/>
            <person name="Shimizu F."/>
            <person name="Wakebe H."/>
            <person name="Hishigaki H."/>
            <person name="Watanabe T."/>
            <person name="Sugiyama A."/>
            <person name="Takemoto M."/>
            <person name="Kawakami B."/>
            <person name="Yamazaki M."/>
            <person name="Watanabe K."/>
            <person name="Kumagai A."/>
            <person name="Itakura S."/>
            <person name="Fukuzumi Y."/>
            <person name="Fujimori Y."/>
            <person name="Komiyama M."/>
            <person name="Tashiro H."/>
            <person name="Tanigami A."/>
            <person name="Fujiwara T."/>
            <person name="Ono T."/>
            <person name="Yamada K."/>
            <person name="Fujii Y."/>
            <person name="Ozaki K."/>
            <person name="Hirao M."/>
            <person name="Ohmori Y."/>
            <person name="Kawabata A."/>
            <person name="Hikiji T."/>
            <person name="Kobatake N."/>
            <person name="Inagaki H."/>
            <person name="Ikema Y."/>
            <person name="Okamoto S."/>
            <person name="Okitani R."/>
            <person name="Kawakami T."/>
            <person name="Noguchi S."/>
            <person name="Itoh T."/>
            <person name="Shigeta K."/>
            <person name="Senba T."/>
            <person name="Matsumura K."/>
            <person name="Nakajima Y."/>
            <person name="Mizuno T."/>
            <person name="Morinaga M."/>
            <person name="Sasaki M."/>
            <person name="Togashi T."/>
            <person name="Oyama M."/>
            <person name="Hata H."/>
            <person name="Watanabe M."/>
            <person name="Komatsu T."/>
            <person name="Mizushima-Sugano J."/>
            <person name="Satoh T."/>
            <person name="Shirai Y."/>
            <person name="Takahashi Y."/>
            <person name="Nakagawa K."/>
            <person name="Okumura K."/>
            <person name="Nagase T."/>
            <person name="Nomura N."/>
            <person name="Kikuchi H."/>
            <person name="Masuho Y."/>
            <person name="Yamashita R."/>
            <person name="Nakai K."/>
            <person name="Yada T."/>
            <person name="Nakamura Y."/>
            <person name="Ohara O."/>
            <person name="Isogai T."/>
            <person name="Sugano S."/>
        </authorList>
    </citation>
    <scope>NUCLEOTIDE SEQUENCE [LARGE SCALE MRNA] (ISOFORM 5)</scope>
    <source>
        <tissue>Kidney</tissue>
    </source>
</reference>
<reference key="3">
    <citation type="journal article" date="2003" name="Nature">
        <title>The DNA sequence and analysis of human chromosome 14.</title>
        <authorList>
            <person name="Heilig R."/>
            <person name="Eckenberg R."/>
            <person name="Petit J.-L."/>
            <person name="Fonknechten N."/>
            <person name="Da Silva C."/>
            <person name="Cattolico L."/>
            <person name="Levy M."/>
            <person name="Barbe V."/>
            <person name="De Berardinis V."/>
            <person name="Ureta-Vidal A."/>
            <person name="Pelletier E."/>
            <person name="Vico V."/>
            <person name="Anthouard V."/>
            <person name="Rowen L."/>
            <person name="Madan A."/>
            <person name="Qin S."/>
            <person name="Sun H."/>
            <person name="Du H."/>
            <person name="Pepin K."/>
            <person name="Artiguenave F."/>
            <person name="Robert C."/>
            <person name="Cruaud C."/>
            <person name="Bruels T."/>
            <person name="Jaillon O."/>
            <person name="Friedlander L."/>
            <person name="Samson G."/>
            <person name="Brottier P."/>
            <person name="Cure S."/>
            <person name="Segurens B."/>
            <person name="Aniere F."/>
            <person name="Samain S."/>
            <person name="Crespeau H."/>
            <person name="Abbasi N."/>
            <person name="Aiach N."/>
            <person name="Boscus D."/>
            <person name="Dickhoff R."/>
            <person name="Dors M."/>
            <person name="Dubois I."/>
            <person name="Friedman C."/>
            <person name="Gouyvenoux M."/>
            <person name="James R."/>
            <person name="Madan A."/>
            <person name="Mairey-Estrada B."/>
            <person name="Mangenot S."/>
            <person name="Martins N."/>
            <person name="Menard M."/>
            <person name="Oztas S."/>
            <person name="Ratcliffe A."/>
            <person name="Shaffer T."/>
            <person name="Trask B."/>
            <person name="Vacherie B."/>
            <person name="Bellemere C."/>
            <person name="Belser C."/>
            <person name="Besnard-Gonnet M."/>
            <person name="Bartol-Mavel D."/>
            <person name="Boutard M."/>
            <person name="Briez-Silla S."/>
            <person name="Combette S."/>
            <person name="Dufosse-Laurent V."/>
            <person name="Ferron C."/>
            <person name="Lechaplais C."/>
            <person name="Louesse C."/>
            <person name="Muselet D."/>
            <person name="Magdelenat G."/>
            <person name="Pateau E."/>
            <person name="Petit E."/>
            <person name="Sirvain-Trukniewicz P."/>
            <person name="Trybou A."/>
            <person name="Vega-Czarny N."/>
            <person name="Bataille E."/>
            <person name="Bluet E."/>
            <person name="Bordelais I."/>
            <person name="Dubois M."/>
            <person name="Dumont C."/>
            <person name="Guerin T."/>
            <person name="Haffray S."/>
            <person name="Hammadi R."/>
            <person name="Muanga J."/>
            <person name="Pellouin V."/>
            <person name="Robert D."/>
            <person name="Wunderle E."/>
            <person name="Gauguet G."/>
            <person name="Roy A."/>
            <person name="Sainte-Marthe L."/>
            <person name="Verdier J."/>
            <person name="Verdier-Discala C."/>
            <person name="Hillier L.W."/>
            <person name="Fulton L."/>
            <person name="McPherson J."/>
            <person name="Matsuda F."/>
            <person name="Wilson R."/>
            <person name="Scarpelli C."/>
            <person name="Gyapay G."/>
            <person name="Wincker P."/>
            <person name="Saurin W."/>
            <person name="Quetier F."/>
            <person name="Waterston R."/>
            <person name="Hood L."/>
            <person name="Weissenbach J."/>
        </authorList>
    </citation>
    <scope>NUCLEOTIDE SEQUENCE [LARGE SCALE GENOMIC DNA]</scope>
</reference>
<reference key="4">
    <citation type="journal article" date="2004" name="Genome Res.">
        <title>The status, quality, and expansion of the NIH full-length cDNA project: the Mammalian Gene Collection (MGC).</title>
        <authorList>
            <consortium name="The MGC Project Team"/>
        </authorList>
    </citation>
    <scope>NUCLEOTIDE SEQUENCE [LARGE SCALE MRNA] (ISOFORM 2)</scope>
    <scope>NUCLEOTIDE SEQUENCE [LARGE SCALE MRNA] OF 84-362 (ISOFORM 1)</scope>
    <scope>VARIANT LEU-334</scope>
    <source>
        <tissue>Skin</tissue>
    </source>
</reference>
<reference key="5">
    <citation type="journal article" date="2006" name="Science">
        <title>The consensus coding sequences of human breast and colorectal cancers.</title>
        <authorList>
            <person name="Sjoeblom T."/>
            <person name="Jones S."/>
            <person name="Wood L.D."/>
            <person name="Parsons D.W."/>
            <person name="Lin J."/>
            <person name="Barber T.D."/>
            <person name="Mandelker D."/>
            <person name="Leary R.J."/>
            <person name="Ptak J."/>
            <person name="Silliman N."/>
            <person name="Szabo S."/>
            <person name="Buckhaults P."/>
            <person name="Farrell C."/>
            <person name="Meeh P."/>
            <person name="Markowitz S.D."/>
            <person name="Willis J."/>
            <person name="Dawson D."/>
            <person name="Willson J.K.V."/>
            <person name="Gazdar A.F."/>
            <person name="Hartigan J."/>
            <person name="Wu L."/>
            <person name="Liu C."/>
            <person name="Parmigiani G."/>
            <person name="Park B.H."/>
            <person name="Bachman K.E."/>
            <person name="Papadopoulos N."/>
            <person name="Vogelstein B."/>
            <person name="Kinzler K.W."/>
            <person name="Velculescu V.E."/>
        </authorList>
    </citation>
    <scope>VARIANT [LARGE SCALE ANALYSIS] VAL-282</scope>
</reference>
<protein>
    <recommendedName>
        <fullName evidence="6">Protein ABHD12B</fullName>
        <ecNumber>3.-.-.-</ecNumber>
    </recommendedName>
    <alternativeName>
        <fullName evidence="7">Abhydrolase domain-containing protein 12B</fullName>
    </alternativeName>
    <alternativeName>
        <fullName evidence="6">Alpha/beta hydrolase domain-containing protein 12B</fullName>
    </alternativeName>
</protein>
<keyword id="KW-0025">Alternative splicing</keyword>
<keyword id="KW-0378">Hydrolase</keyword>
<keyword id="KW-1267">Proteomics identification</keyword>
<keyword id="KW-1185">Reference proteome</keyword>
<comment type="interaction">
    <interactant intactId="EBI-21854797">
        <id>Q7Z5M8-2</id>
    </interactant>
    <interactant intactId="EBI-21591415">
        <id>P13473-2</id>
        <label>LAMP2</label>
    </interactant>
    <organismsDiffer>false</organismsDiffer>
    <experiments>3</experiments>
</comment>
<comment type="interaction">
    <interactant intactId="EBI-21854797">
        <id>Q7Z5M8-2</id>
    </interactant>
    <interactant intactId="EBI-2623095">
        <id>Q9Y371</id>
        <label>SH3GLB1</label>
    </interactant>
    <organismsDiffer>false</organismsDiffer>
    <experiments>3</experiments>
</comment>
<comment type="alternative products">
    <event type="alternative splicing"/>
    <isoform>
        <id>Q7Z5M8-1</id>
        <name>1</name>
        <name>Variant 1</name>
        <sequence type="displayed"/>
    </isoform>
    <isoform>
        <id>Q7Z5M8-2</id>
        <name>2</name>
        <name>Variant 3</name>
        <sequence type="described" ref="VSP_010687"/>
    </isoform>
    <isoform>
        <id>Q7Z5M8-4</id>
        <name>4</name>
        <name>Variant 4</name>
        <sequence type="described" ref="VSP_041149 VSP_041150"/>
    </isoform>
    <isoform>
        <id>Q7Z5M8-5</id>
        <name>5</name>
        <sequence type="described" ref="VSP_010687 VSP_010688 VSP_010689"/>
    </isoform>
</comment>
<comment type="miscellaneous">
    <molecule>Isoform 4</molecule>
    <text evidence="6">May be produced at very low levels due to a premature stop codon in the mRNA, leading to nonsense-mediated mRNA decay.</text>
</comment>
<comment type="similarity">
    <text evidence="6">Belongs to the serine esterase family.</text>
</comment>
<comment type="sequence caution" evidence="6">
    <conflict type="erroneous initiation">
        <sequence resource="EMBL-CDS" id="AAH34603"/>
    </conflict>
    <text>Truncated N-terminus.</text>
</comment>
<comment type="sequence caution" evidence="6">
    <conflict type="erroneous translation">
        <sequence resource="EMBL-CDS" id="AAP78477"/>
    </conflict>
    <text>Wrong choice of CDS.</text>
</comment>
<comment type="sequence caution" evidence="6">
    <conflict type="erroneous translation">
        <sequence resource="EMBL-CDS" id="AAP78479"/>
    </conflict>
    <text>Wrong choice of CDS.</text>
</comment>
<proteinExistence type="evidence at protein level"/>